<sequence length="1320" mass="149419">MELDWRSTLSNQERSKYITELAQILADISQINGGARANFDLEKLKKTAEQFETSLYASSSSKELYLDAMRKRIAAMDAAKKKTLANQKQKAAAQRKGFGLAPTLNPQMFLNQQAQARQQARPMRGSVGGGQSPVMMMPQHGVPAHVAHGVPPGVAVSQAKRAQLSLQQQQQINEMKVAEIPRELLQRIPNIPPGVTTWQQVTELAQQKRLTQSDLQIAKQVYQMHQQMMVKSKMQQASLNQLTPQQRAQLQQRQQSTQQSQSAPPQAPQVAQSQQVPAQKPQQQQQQQQQQQQQQQQQQQQQQQQQQQQQQQQQQQQQQQQQQQQQQQQQQQQQQQQQQQQQQQQQQQQQQQQQQHAAAQAQLQHPNAYQQKNMMAQQSAAALQQGQQQPRQMGPQQAREVPNVLNKLNQVFSPAEQKALYENGKKLVQDLQLAGKLPASLTQQQQILYIKKYINQMVLKKLQQNIRLAQQIGAANSANTQSQMAAQAGARFTPGMAQHSQFAQQQHTGNQAQVQSQVSQSISQQQAQLTQKVQQAQQSQLQQTQEQDPQHTQLADSFSQRQFTSPTLAKPSANVSTIAQQQTQPTALSQSHPQQQQGSQAQQQLLQQQQGSQAQQQLLQQQQQQPPPPPPQPQQQTQQPQQPQQQQQPQPQPQLQQQQQLGLQPHQPQLAQAQAQQPQPQQQTQQQTQQQQQQQQQQQQQQTQQQTQHQPQPQLKPQSQQPQPVPQQVQSQQPQQVQSQQQPQPQQLSQPAQQQSQQQQQQQQQSQQQKLRQVQLPQQTPKITLPRPTEQDMMILKRINSEVAKSPLRLSNITNQLTPEQKQMIKNKLQANQQLLSNVDNFIPTLYLITRNEENVRQLLQIRMLAKEIMEHASKGVFIVPPDVVDKVIFRYQKYYEFIKEQLLRRHQQLFSTRQQQMQQQVVQQQQAGQIKLGQNAVGAPQNPQVTTNTDIAMQQQRVQGSFQQMQQQIRQQQVKQAQLQQAQQQAQQQQQAQQLQQGHMPVQQSMPLAGVQTVMATQAATLPQHASPVSSNTANIPKTGDAPVSIDSVTPVPPGIVNSSGPSPVAGKQILAATMVPQHKLSPTKSDFAQAPTADNPYQVDELRLKNLAIRKAEIMSRFKHRQEIFEHSPVDLFLCTLADCMGIKDGSYELLAPIPALMVEQINGTGKKKFTKAQQRVREQDSIECYVKDNKLMMSSKFSADERSYSIHDRDISSCFLDLYGLSDCTSLSFDSSSAEPPTEQVNKKRSHDSLEISPAESDSSLLNDSKKLKVDSPDDLFMTSNMMLDNKNAQPPIGLGLGVGLGEAGSSIWNWNYWESL</sequence>
<keyword id="KW-0010">Activator</keyword>
<keyword id="KW-0539">Nucleus</keyword>
<keyword id="KW-1185">Reference proteome</keyword>
<keyword id="KW-0804">Transcription</keyword>
<keyword id="KW-0805">Transcription regulation</keyword>
<gene>
    <name type="primary">GAL11</name>
    <name type="synonym">MED15</name>
    <name type="ordered locus">ACR285C</name>
</gene>
<accession>Q75BI6</accession>
<reference key="1">
    <citation type="journal article" date="2004" name="Science">
        <title>The Ashbya gossypii genome as a tool for mapping the ancient Saccharomyces cerevisiae genome.</title>
        <authorList>
            <person name="Dietrich F.S."/>
            <person name="Voegeli S."/>
            <person name="Brachat S."/>
            <person name="Lerch A."/>
            <person name="Gates K."/>
            <person name="Steiner S."/>
            <person name="Mohr C."/>
            <person name="Poehlmann R."/>
            <person name="Luedi P."/>
            <person name="Choi S."/>
            <person name="Wing R.A."/>
            <person name="Flavier A."/>
            <person name="Gaffney T.D."/>
            <person name="Philippsen P."/>
        </authorList>
    </citation>
    <scope>NUCLEOTIDE SEQUENCE [LARGE SCALE GENOMIC DNA]</scope>
    <source>
        <strain>ATCC 10895 / CBS 109.51 / FGSC 9923 / NRRL Y-1056</strain>
    </source>
</reference>
<reference key="2">
    <citation type="journal article" date="2013" name="G3 (Bethesda)">
        <title>Genomes of Ashbya fungi isolated from insects reveal four mating-type loci, numerous translocations, lack of transposons, and distinct gene duplications.</title>
        <authorList>
            <person name="Dietrich F.S."/>
            <person name="Voegeli S."/>
            <person name="Kuo S."/>
            <person name="Philippsen P."/>
        </authorList>
    </citation>
    <scope>GENOME REANNOTATION</scope>
    <scope>SEQUENCE REVISION TO 1003; 1247 AND C-TERMINUS</scope>
    <source>
        <strain>ATCC 10895 / CBS 109.51 / FGSC 9923 / NRRL Y-1056</strain>
    </source>
</reference>
<name>MED15_EREGS</name>
<evidence type="ECO:0000250" key="1"/>
<evidence type="ECO:0000256" key="2">
    <source>
        <dbReference type="SAM" id="MobiDB-lite"/>
    </source>
</evidence>
<evidence type="ECO:0000305" key="3"/>
<dbReference type="EMBL" id="AE016816">
    <property type="protein sequence ID" value="AAS51511.2"/>
    <property type="molecule type" value="Genomic_DNA"/>
</dbReference>
<dbReference type="RefSeq" id="NP_983687.2">
    <property type="nucleotide sequence ID" value="NM_209040.2"/>
</dbReference>
<dbReference type="SMR" id="Q75BI6"/>
<dbReference type="FunCoup" id="Q75BI6">
    <property type="interactions" value="268"/>
</dbReference>
<dbReference type="STRING" id="284811.Q75BI6"/>
<dbReference type="EnsemblFungi" id="AAS51511">
    <property type="protein sequence ID" value="AAS51511"/>
    <property type="gene ID" value="AGOS_ACR285C"/>
</dbReference>
<dbReference type="GeneID" id="4619822"/>
<dbReference type="KEGG" id="ago:AGOS_ACR285C"/>
<dbReference type="eggNOG" id="ENOG502QVXD">
    <property type="taxonomic scope" value="Eukaryota"/>
</dbReference>
<dbReference type="HOGENOM" id="CLU_009962_0_0_1"/>
<dbReference type="InParanoid" id="Q75BI6"/>
<dbReference type="OMA" id="RYQKYYE"/>
<dbReference type="OrthoDB" id="1938591at2759"/>
<dbReference type="Proteomes" id="UP000000591">
    <property type="component" value="Chromosome III"/>
</dbReference>
<dbReference type="GO" id="GO:0016592">
    <property type="term" value="C:mediator complex"/>
    <property type="evidence" value="ECO:0007669"/>
    <property type="project" value="InterPro"/>
</dbReference>
<dbReference type="GO" id="GO:0003712">
    <property type="term" value="F:transcription coregulator activity"/>
    <property type="evidence" value="ECO:0007669"/>
    <property type="project" value="InterPro"/>
</dbReference>
<dbReference type="GO" id="GO:0006357">
    <property type="term" value="P:regulation of transcription by RNA polymerase II"/>
    <property type="evidence" value="ECO:0007669"/>
    <property type="project" value="InterPro"/>
</dbReference>
<dbReference type="CDD" id="cd12191">
    <property type="entry name" value="gal11_coact"/>
    <property type="match status" value="1"/>
</dbReference>
<dbReference type="Gene3D" id="1.10.246.20">
    <property type="entry name" value="Coactivator CBP, KIX domain"/>
    <property type="match status" value="1"/>
</dbReference>
<dbReference type="InterPro" id="IPR033789">
    <property type="entry name" value="Gal11_coact"/>
</dbReference>
<dbReference type="InterPro" id="IPR036529">
    <property type="entry name" value="KIX_dom_sf"/>
</dbReference>
<dbReference type="InterPro" id="IPR008626">
    <property type="entry name" value="Mediator_Med15_fun"/>
</dbReference>
<dbReference type="Pfam" id="PF05397">
    <property type="entry name" value="Med15_fungi"/>
    <property type="match status" value="1"/>
</dbReference>
<proteinExistence type="inferred from homology"/>
<feature type="chain" id="PRO_0000304670" description="Mediator of RNA polymerase II transcription subunit 15">
    <location>
        <begin position="1"/>
        <end position="1320"/>
    </location>
</feature>
<feature type="region of interest" description="Disordered" evidence="2">
    <location>
        <begin position="235"/>
        <end position="283"/>
    </location>
</feature>
<feature type="region of interest" description="Disordered" evidence="2">
    <location>
        <begin position="372"/>
        <end position="398"/>
    </location>
</feature>
<feature type="region of interest" description="Disordered" evidence="2">
    <location>
        <begin position="540"/>
        <end position="688"/>
    </location>
</feature>
<feature type="region of interest" description="Disordered" evidence="2">
    <location>
        <begin position="702"/>
        <end position="791"/>
    </location>
</feature>
<feature type="region of interest" description="Disordered" evidence="2">
    <location>
        <begin position="1233"/>
        <end position="1270"/>
    </location>
</feature>
<feature type="compositionally biased region" description="Polar residues" evidence="2">
    <location>
        <begin position="235"/>
        <end position="244"/>
    </location>
</feature>
<feature type="compositionally biased region" description="Low complexity" evidence="2">
    <location>
        <begin position="245"/>
        <end position="283"/>
    </location>
</feature>
<feature type="compositionally biased region" description="Low complexity" evidence="2">
    <location>
        <begin position="375"/>
        <end position="398"/>
    </location>
</feature>
<feature type="compositionally biased region" description="Low complexity" evidence="2">
    <location>
        <begin position="540"/>
        <end position="554"/>
    </location>
</feature>
<feature type="compositionally biased region" description="Polar residues" evidence="2">
    <location>
        <begin position="555"/>
        <end position="587"/>
    </location>
</feature>
<feature type="compositionally biased region" description="Low complexity" evidence="2">
    <location>
        <begin position="588"/>
        <end position="624"/>
    </location>
</feature>
<feature type="compositionally biased region" description="Low complexity" evidence="2">
    <location>
        <begin position="634"/>
        <end position="688"/>
    </location>
</feature>
<feature type="compositionally biased region" description="Low complexity" evidence="2">
    <location>
        <begin position="702"/>
        <end position="780"/>
    </location>
</feature>
<protein>
    <recommendedName>
        <fullName>Mediator of RNA polymerase II transcription subunit 15</fullName>
    </recommendedName>
    <alternativeName>
        <fullName>Mediator complex subunit 15</fullName>
    </alternativeName>
    <alternativeName>
        <fullName>Transcription regulatory protein GAL11</fullName>
    </alternativeName>
</protein>
<comment type="function">
    <text evidence="1">Component of the Mediator complex, a coactivator involved in regulated gene transcription of nearly all RNA polymerase II-dependent genes. Mediator functions as a bridge to convey information from gene-specific regulatory proteins to the basal RNA polymerase II transcription machinery. Mediator is recruited to promoters by direct interactions with regulatory proteins and serves as a scaffold for the assembly of a functional preinitiation complex with RNA polymerase II and the general transcription factors (By similarity).</text>
</comment>
<comment type="subunit">
    <text evidence="1">Component of the Mediator complex.</text>
</comment>
<comment type="subcellular location">
    <subcellularLocation>
        <location evidence="1">Nucleus</location>
    </subcellularLocation>
</comment>
<comment type="similarity">
    <text evidence="3">Belongs to the Mediator complex subunit 15 family.</text>
</comment>
<organism>
    <name type="scientific">Eremothecium gossypii (strain ATCC 10895 / CBS 109.51 / FGSC 9923 / NRRL Y-1056)</name>
    <name type="common">Yeast</name>
    <name type="synonym">Ashbya gossypii</name>
    <dbReference type="NCBI Taxonomy" id="284811"/>
    <lineage>
        <taxon>Eukaryota</taxon>
        <taxon>Fungi</taxon>
        <taxon>Dikarya</taxon>
        <taxon>Ascomycota</taxon>
        <taxon>Saccharomycotina</taxon>
        <taxon>Saccharomycetes</taxon>
        <taxon>Saccharomycetales</taxon>
        <taxon>Saccharomycetaceae</taxon>
        <taxon>Eremothecium</taxon>
    </lineage>
</organism>